<sequence length="1165" mass="128785">MLEGPILAVSRQTKSVVDIPGAPQRYSFAKVSAPIEVPGLLDLQLDSYSWLIGTPEWRARQKEEFGEGARVTSGLENILEELSPIQDYSGNMSLSLSEPRFEDVKNTIDEAKEKDINYAAPLYVTAEFVNNTTGEIKSQTVFIGDFPMMTDKGTFIINGTERVVVSQLVRSPGVYFDQTIDKSTERPLHAVKVIPSRGAWLEFDVDKRDSVGVRIDRKRRQPVTVLLKALGWTTEQITERFGFSEIMMSTLESDGVANTDEALLEIYRKQRPGEQPTRDLAQSLLDNSFFRAKRYDLARVGRYKINRKLGLGGDHDGLMTLTEEDIATTIEYLVRLHAGERVMTSPNGEEIPVETDDIDHFGNRRLRTVGELIQNQVRVGLSRMERVVRERMTTQDAESITPTSLINVRPVSAAIREFFGTSQLSQFMDQNNSLSGLTHKRRLSALGPGGLSRERAGIEVRDVHPSHYGRMCPIETPEGPNIGLIGSLASYARVNPFGFIETPYRRIIDGKLTDQIDYLTADEEDRFVVAQANTHYDEEGNITDETVTVRLKDGDIAMVGRNAVDYMDVSPRQMVSVGTAMIPFLEHDDANRALMGANMQKQAVPLIRAEAPFVGTGMEQRAAYDAGDLVITPVAGVVENVSADFITIMADDGKRETYLLRKFQRTNQGTSYNQKPLVNLGERVEAGQVIADGPGTFNGEMSLGRNLLVAFMPWEGHNYEDAIILNQNIVEQDILTSIHIEEHEIDARDTKLGAEEITRDIPNVSEEVLKDLDDRGIVRIGADVRDGDILVGKVTPKGETELTPEERLLRAIFGEKAREVRDTSMKVPHGETGKVIGVRHFSREDDDDLAPGVNEMIRIYVAQKRKIQDGDKLAGRHGNKGVVGKILPQEDMPFLPDGTPVDIILNTHGVPRRMNIGQVLETHLGWLASAGWSVDPEDPENAELVKTLPADLLEVPAGSLTATPVFDGASNEELAGLLANSRPNRDGDVMVNADGKATLIDGRSGEPYPYPVSIGYMYMLKLHHLVDEKIHARSTGPYSMITQQPLGGKAQFGGQRFGEMEVWAMQAYGAAYTLQELLTIKSDDVVGRVKVYEAIVKGENIPDPGIPESFKVLLKELQSLCLNVEVLSADGTPMELAGDDDDFDQAGASLGINLSRDERSDADTA</sequence>
<name>RPOB_CORGL</name>
<feature type="chain" id="PRO_0000047889" description="DNA-directed RNA polymerase subunit beta">
    <location>
        <begin position="1"/>
        <end position="1165"/>
    </location>
</feature>
<protein>
    <recommendedName>
        <fullName evidence="1">DNA-directed RNA polymerase subunit beta</fullName>
        <shortName evidence="1">RNAP subunit beta</shortName>
        <ecNumber evidence="1">2.7.7.6</ecNumber>
    </recommendedName>
    <alternativeName>
        <fullName evidence="1">RNA polymerase subunit beta</fullName>
    </alternativeName>
    <alternativeName>
        <fullName evidence="1">Transcriptase subunit beta</fullName>
    </alternativeName>
</protein>
<organism>
    <name type="scientific">Corynebacterium glutamicum (strain ATCC 13032 / DSM 20300 / JCM 1318 / BCRC 11384 / CCUG 27702 / LMG 3730 / NBRC 12168 / NCIMB 10025 / NRRL B-2784 / 534)</name>
    <dbReference type="NCBI Taxonomy" id="196627"/>
    <lineage>
        <taxon>Bacteria</taxon>
        <taxon>Bacillati</taxon>
        <taxon>Actinomycetota</taxon>
        <taxon>Actinomycetes</taxon>
        <taxon>Mycobacteriales</taxon>
        <taxon>Corynebacteriaceae</taxon>
        <taxon>Corynebacterium</taxon>
    </lineage>
</organism>
<comment type="function">
    <text evidence="1">DNA-dependent RNA polymerase catalyzes the transcription of DNA into RNA using the four ribonucleoside triphosphates as substrates.</text>
</comment>
<comment type="catalytic activity">
    <reaction evidence="1">
        <text>RNA(n) + a ribonucleoside 5'-triphosphate = RNA(n+1) + diphosphate</text>
        <dbReference type="Rhea" id="RHEA:21248"/>
        <dbReference type="Rhea" id="RHEA-COMP:14527"/>
        <dbReference type="Rhea" id="RHEA-COMP:17342"/>
        <dbReference type="ChEBI" id="CHEBI:33019"/>
        <dbReference type="ChEBI" id="CHEBI:61557"/>
        <dbReference type="ChEBI" id="CHEBI:140395"/>
        <dbReference type="EC" id="2.7.7.6"/>
    </reaction>
</comment>
<comment type="subunit">
    <text evidence="1">The RNAP catalytic core consists of 2 alpha, 1 beta, 1 beta' and 1 omega subunit. When a sigma factor is associated with the core the holoenzyme is formed, which can initiate transcription.</text>
</comment>
<comment type="similarity">
    <text evidence="1">Belongs to the RNA polymerase beta chain family.</text>
</comment>
<evidence type="ECO:0000255" key="1">
    <source>
        <dbReference type="HAMAP-Rule" id="MF_01321"/>
    </source>
</evidence>
<proteinExistence type="inferred from homology"/>
<accession>Q8NT26</accession>
<keyword id="KW-0240">DNA-directed RNA polymerase</keyword>
<keyword id="KW-0548">Nucleotidyltransferase</keyword>
<keyword id="KW-1185">Reference proteome</keyword>
<keyword id="KW-0804">Transcription</keyword>
<keyword id="KW-0808">Transferase</keyword>
<reference key="1">
    <citation type="journal article" date="2003" name="Appl. Microbiol. Biotechnol.">
        <title>The Corynebacterium glutamicum genome: features and impacts on biotechnological processes.</title>
        <authorList>
            <person name="Ikeda M."/>
            <person name="Nakagawa S."/>
        </authorList>
    </citation>
    <scope>NUCLEOTIDE SEQUENCE [LARGE SCALE GENOMIC DNA]</scope>
    <source>
        <strain>ATCC 13032 / DSM 20300 / JCM 1318 / BCRC 11384 / CCUG 27702 / LMG 3730 / NBRC 12168 / NCIMB 10025 / NRRL B-2784 / 534</strain>
    </source>
</reference>
<reference key="2">
    <citation type="journal article" date="2003" name="J. Biotechnol.">
        <title>The complete Corynebacterium glutamicum ATCC 13032 genome sequence and its impact on the production of L-aspartate-derived amino acids and vitamins.</title>
        <authorList>
            <person name="Kalinowski J."/>
            <person name="Bathe B."/>
            <person name="Bartels D."/>
            <person name="Bischoff N."/>
            <person name="Bott M."/>
            <person name="Burkovski A."/>
            <person name="Dusch N."/>
            <person name="Eggeling L."/>
            <person name="Eikmanns B.J."/>
            <person name="Gaigalat L."/>
            <person name="Goesmann A."/>
            <person name="Hartmann M."/>
            <person name="Huthmacher K."/>
            <person name="Kraemer R."/>
            <person name="Linke B."/>
            <person name="McHardy A.C."/>
            <person name="Meyer F."/>
            <person name="Moeckel B."/>
            <person name="Pfefferle W."/>
            <person name="Puehler A."/>
            <person name="Rey D.A."/>
            <person name="Rueckert C."/>
            <person name="Rupp O."/>
            <person name="Sahm H."/>
            <person name="Wendisch V.F."/>
            <person name="Wiegraebe I."/>
            <person name="Tauch A."/>
        </authorList>
    </citation>
    <scope>NUCLEOTIDE SEQUENCE [LARGE SCALE GENOMIC DNA]</scope>
    <source>
        <strain>ATCC 13032 / DSM 20300 / JCM 1318 / BCRC 11384 / CCUG 27702 / LMG 3730 / NBRC 12168 / NCIMB 10025 / NRRL B-2784 / 534</strain>
    </source>
</reference>
<dbReference type="EC" id="2.7.7.6" evidence="1"/>
<dbReference type="EMBL" id="BA000036">
    <property type="protein sequence ID" value="BAB97881.1"/>
    <property type="molecule type" value="Genomic_DNA"/>
</dbReference>
<dbReference type="EMBL" id="BX927149">
    <property type="protein sequence ID" value="CAF19202.1"/>
    <property type="molecule type" value="Genomic_DNA"/>
</dbReference>
<dbReference type="RefSeq" id="NP_599733.1">
    <property type="nucleotide sequence ID" value="NC_003450.3"/>
</dbReference>
<dbReference type="RefSeq" id="WP_011265569.1">
    <property type="nucleotide sequence ID" value="NC_006958.1"/>
</dbReference>
<dbReference type="SMR" id="Q8NT26"/>
<dbReference type="STRING" id="196627.cg0576"/>
<dbReference type="KEGG" id="cgb:cg0576"/>
<dbReference type="KEGG" id="cgl:Cgl0488"/>
<dbReference type="PATRIC" id="fig|196627.13.peg.487"/>
<dbReference type="eggNOG" id="COG0085">
    <property type="taxonomic scope" value="Bacteria"/>
</dbReference>
<dbReference type="HOGENOM" id="CLU_000524_4_3_11"/>
<dbReference type="OrthoDB" id="9803954at2"/>
<dbReference type="BioCyc" id="CORYNE:G18NG-10050-MONOMER"/>
<dbReference type="Proteomes" id="UP000000582">
    <property type="component" value="Chromosome"/>
</dbReference>
<dbReference type="Proteomes" id="UP000001009">
    <property type="component" value="Chromosome"/>
</dbReference>
<dbReference type="GO" id="GO:0000428">
    <property type="term" value="C:DNA-directed RNA polymerase complex"/>
    <property type="evidence" value="ECO:0007669"/>
    <property type="project" value="UniProtKB-KW"/>
</dbReference>
<dbReference type="GO" id="GO:0003677">
    <property type="term" value="F:DNA binding"/>
    <property type="evidence" value="ECO:0007669"/>
    <property type="project" value="UniProtKB-UniRule"/>
</dbReference>
<dbReference type="GO" id="GO:0003899">
    <property type="term" value="F:DNA-directed RNA polymerase activity"/>
    <property type="evidence" value="ECO:0007669"/>
    <property type="project" value="UniProtKB-UniRule"/>
</dbReference>
<dbReference type="GO" id="GO:0032549">
    <property type="term" value="F:ribonucleoside binding"/>
    <property type="evidence" value="ECO:0007669"/>
    <property type="project" value="InterPro"/>
</dbReference>
<dbReference type="GO" id="GO:0006351">
    <property type="term" value="P:DNA-templated transcription"/>
    <property type="evidence" value="ECO:0007669"/>
    <property type="project" value="UniProtKB-UniRule"/>
</dbReference>
<dbReference type="CDD" id="cd00653">
    <property type="entry name" value="RNA_pol_B_RPB2"/>
    <property type="match status" value="1"/>
</dbReference>
<dbReference type="Gene3D" id="2.40.50.100">
    <property type="match status" value="1"/>
</dbReference>
<dbReference type="Gene3D" id="2.40.50.150">
    <property type="match status" value="1"/>
</dbReference>
<dbReference type="Gene3D" id="3.90.1100.10">
    <property type="match status" value="1"/>
</dbReference>
<dbReference type="Gene3D" id="2.30.150.10">
    <property type="entry name" value="DNA-directed RNA polymerase, beta subunit, external 1 domain"/>
    <property type="match status" value="1"/>
</dbReference>
<dbReference type="Gene3D" id="2.40.270.10">
    <property type="entry name" value="DNA-directed RNA polymerase, subunit 2, domain 6"/>
    <property type="match status" value="1"/>
</dbReference>
<dbReference type="Gene3D" id="3.90.1800.10">
    <property type="entry name" value="RNA polymerase alpha subunit dimerisation domain"/>
    <property type="match status" value="1"/>
</dbReference>
<dbReference type="Gene3D" id="3.90.1110.10">
    <property type="entry name" value="RNA polymerase Rpb2, domain 2"/>
    <property type="match status" value="1"/>
</dbReference>
<dbReference type="HAMAP" id="MF_01321">
    <property type="entry name" value="RNApol_bact_RpoB"/>
    <property type="match status" value="1"/>
</dbReference>
<dbReference type="InterPro" id="IPR042107">
    <property type="entry name" value="DNA-dir_RNA_pol_bsu_ext_1_sf"/>
</dbReference>
<dbReference type="InterPro" id="IPR019462">
    <property type="entry name" value="DNA-dir_RNA_pol_bsu_external_1"/>
</dbReference>
<dbReference type="InterPro" id="IPR015712">
    <property type="entry name" value="DNA-dir_RNA_pol_su2"/>
</dbReference>
<dbReference type="InterPro" id="IPR007120">
    <property type="entry name" value="DNA-dir_RNAP_su2_dom"/>
</dbReference>
<dbReference type="InterPro" id="IPR037033">
    <property type="entry name" value="DNA-dir_RNAP_su2_hyb_sf"/>
</dbReference>
<dbReference type="InterPro" id="IPR010243">
    <property type="entry name" value="RNA_pol_bsu_bac"/>
</dbReference>
<dbReference type="InterPro" id="IPR007121">
    <property type="entry name" value="RNA_pol_bsu_CS"/>
</dbReference>
<dbReference type="InterPro" id="IPR007644">
    <property type="entry name" value="RNA_pol_bsu_protrusion"/>
</dbReference>
<dbReference type="InterPro" id="IPR007642">
    <property type="entry name" value="RNA_pol_Rpb2_2"/>
</dbReference>
<dbReference type="InterPro" id="IPR037034">
    <property type="entry name" value="RNA_pol_Rpb2_2_sf"/>
</dbReference>
<dbReference type="InterPro" id="IPR007645">
    <property type="entry name" value="RNA_pol_Rpb2_3"/>
</dbReference>
<dbReference type="InterPro" id="IPR007641">
    <property type="entry name" value="RNA_pol_Rpb2_7"/>
</dbReference>
<dbReference type="InterPro" id="IPR014724">
    <property type="entry name" value="RNA_pol_RPB2_OB-fold"/>
</dbReference>
<dbReference type="NCBIfam" id="NF001616">
    <property type="entry name" value="PRK00405.1"/>
    <property type="match status" value="1"/>
</dbReference>
<dbReference type="NCBIfam" id="TIGR02013">
    <property type="entry name" value="rpoB"/>
    <property type="match status" value="1"/>
</dbReference>
<dbReference type="PANTHER" id="PTHR20856">
    <property type="entry name" value="DNA-DIRECTED RNA POLYMERASE I SUBUNIT 2"/>
    <property type="match status" value="1"/>
</dbReference>
<dbReference type="Pfam" id="PF04563">
    <property type="entry name" value="RNA_pol_Rpb2_1"/>
    <property type="match status" value="1"/>
</dbReference>
<dbReference type="Pfam" id="PF04561">
    <property type="entry name" value="RNA_pol_Rpb2_2"/>
    <property type="match status" value="1"/>
</dbReference>
<dbReference type="Pfam" id="PF04565">
    <property type="entry name" value="RNA_pol_Rpb2_3"/>
    <property type="match status" value="1"/>
</dbReference>
<dbReference type="Pfam" id="PF10385">
    <property type="entry name" value="RNA_pol_Rpb2_45"/>
    <property type="match status" value="1"/>
</dbReference>
<dbReference type="Pfam" id="PF00562">
    <property type="entry name" value="RNA_pol_Rpb2_6"/>
    <property type="match status" value="1"/>
</dbReference>
<dbReference type="Pfam" id="PF04560">
    <property type="entry name" value="RNA_pol_Rpb2_7"/>
    <property type="match status" value="1"/>
</dbReference>
<dbReference type="SUPFAM" id="SSF64484">
    <property type="entry name" value="beta and beta-prime subunits of DNA dependent RNA-polymerase"/>
    <property type="match status" value="1"/>
</dbReference>
<dbReference type="PROSITE" id="PS01166">
    <property type="entry name" value="RNA_POL_BETA"/>
    <property type="match status" value="1"/>
</dbReference>
<gene>
    <name evidence="1" type="primary">rpoB</name>
    <name type="ordered locus">Cgl0488</name>
    <name type="ordered locus">cg0576</name>
</gene>